<accession>Q98RF5</accession>
<proteinExistence type="inferred from homology"/>
<sequence length="222" mass="25117">MAKIYIVGTPIGNLSDITLRALETLKKVDYIACEDTRVSKILLNHYQINKPLFSYHKFNEKSKLNYIFELVESGSDVALISDSGMPVISDPGFLLIREAKKKNIDLEVIPGVSAFSMAFVKSSFPLPFSFLGFLNDKTGKRKNELKKLSAGISYISYVSKYKLIQTLKDLKEVFGLNVEVFLTRELTKKFENDYTGTIDEIIDQLGESIKGEFTLIFFIKQA</sequence>
<name>RSMI_MYCPU</name>
<gene>
    <name evidence="1" type="primary">rsmI</name>
    <name type="ordered locus">MYPU_0540</name>
</gene>
<comment type="function">
    <text evidence="1">Catalyzes the 2'-O-methylation of the ribose of cytidine 1402 (C1402) in 16S rRNA.</text>
</comment>
<comment type="catalytic activity">
    <reaction evidence="1">
        <text>cytidine(1402) in 16S rRNA + S-adenosyl-L-methionine = 2'-O-methylcytidine(1402) in 16S rRNA + S-adenosyl-L-homocysteine + H(+)</text>
        <dbReference type="Rhea" id="RHEA:42924"/>
        <dbReference type="Rhea" id="RHEA-COMP:10285"/>
        <dbReference type="Rhea" id="RHEA-COMP:10286"/>
        <dbReference type="ChEBI" id="CHEBI:15378"/>
        <dbReference type="ChEBI" id="CHEBI:57856"/>
        <dbReference type="ChEBI" id="CHEBI:59789"/>
        <dbReference type="ChEBI" id="CHEBI:74495"/>
        <dbReference type="ChEBI" id="CHEBI:82748"/>
        <dbReference type="EC" id="2.1.1.198"/>
    </reaction>
</comment>
<comment type="subcellular location">
    <subcellularLocation>
        <location evidence="1">Cytoplasm</location>
    </subcellularLocation>
</comment>
<comment type="similarity">
    <text evidence="1">Belongs to the methyltransferase superfamily. RsmI family.</text>
</comment>
<protein>
    <recommendedName>
        <fullName evidence="1">Ribosomal RNA small subunit methyltransferase I</fullName>
        <ecNumber evidence="1">2.1.1.198</ecNumber>
    </recommendedName>
    <alternativeName>
        <fullName evidence="1">16S rRNA 2'-O-ribose C1402 methyltransferase</fullName>
    </alternativeName>
    <alternativeName>
        <fullName evidence="1">rRNA (cytidine-2'-O-)-methyltransferase RsmI</fullName>
    </alternativeName>
</protein>
<feature type="chain" id="PRO_0000211945" description="Ribosomal RNA small subunit methyltransferase I">
    <location>
        <begin position="1"/>
        <end position="222"/>
    </location>
</feature>
<keyword id="KW-0963">Cytoplasm</keyword>
<keyword id="KW-0489">Methyltransferase</keyword>
<keyword id="KW-1185">Reference proteome</keyword>
<keyword id="KW-0698">rRNA processing</keyword>
<keyword id="KW-0949">S-adenosyl-L-methionine</keyword>
<keyword id="KW-0808">Transferase</keyword>
<dbReference type="EC" id="2.1.1.198" evidence="1"/>
<dbReference type="EMBL" id="AL445563">
    <property type="protein sequence ID" value="CAC13227.1"/>
    <property type="molecule type" value="Genomic_DNA"/>
</dbReference>
<dbReference type="PIR" id="F90518">
    <property type="entry name" value="F90518"/>
</dbReference>
<dbReference type="RefSeq" id="WP_010924858.1">
    <property type="nucleotide sequence ID" value="NC_002771.1"/>
</dbReference>
<dbReference type="SMR" id="Q98RF5"/>
<dbReference type="STRING" id="272635.gene:17576633"/>
<dbReference type="KEGG" id="mpu:MYPU_0540"/>
<dbReference type="eggNOG" id="COG0313">
    <property type="taxonomic scope" value="Bacteria"/>
</dbReference>
<dbReference type="HOGENOM" id="CLU_044779_4_0_14"/>
<dbReference type="BioCyc" id="MPUL272635:G1GT6-54-MONOMER"/>
<dbReference type="Proteomes" id="UP000000528">
    <property type="component" value="Chromosome"/>
</dbReference>
<dbReference type="GO" id="GO:0005737">
    <property type="term" value="C:cytoplasm"/>
    <property type="evidence" value="ECO:0007669"/>
    <property type="project" value="UniProtKB-SubCell"/>
</dbReference>
<dbReference type="GO" id="GO:0070677">
    <property type="term" value="F:rRNA (cytosine-2'-O-)-methyltransferase activity"/>
    <property type="evidence" value="ECO:0007669"/>
    <property type="project" value="UniProtKB-UniRule"/>
</dbReference>
<dbReference type="CDD" id="cd11648">
    <property type="entry name" value="RsmI"/>
    <property type="match status" value="1"/>
</dbReference>
<dbReference type="FunFam" id="3.40.1010.10:FF:000007">
    <property type="entry name" value="Ribosomal RNA small subunit methyltransferase I"/>
    <property type="match status" value="1"/>
</dbReference>
<dbReference type="Gene3D" id="3.40.1010.10">
    <property type="entry name" value="Cobalt-precorrin-4 Transmethylase, Domain 1"/>
    <property type="match status" value="1"/>
</dbReference>
<dbReference type="Gene3D" id="3.30.950.10">
    <property type="entry name" value="Methyltransferase, Cobalt-precorrin-4 Transmethylase, Domain 2"/>
    <property type="match status" value="1"/>
</dbReference>
<dbReference type="HAMAP" id="MF_01877">
    <property type="entry name" value="16SrRNA_methyltr_I"/>
    <property type="match status" value="1"/>
</dbReference>
<dbReference type="InterPro" id="IPR000878">
    <property type="entry name" value="4pyrrol_Mease"/>
</dbReference>
<dbReference type="InterPro" id="IPR035996">
    <property type="entry name" value="4pyrrol_Methylase_sf"/>
</dbReference>
<dbReference type="InterPro" id="IPR014777">
    <property type="entry name" value="4pyrrole_Mease_sub1"/>
</dbReference>
<dbReference type="InterPro" id="IPR014776">
    <property type="entry name" value="4pyrrole_Mease_sub2"/>
</dbReference>
<dbReference type="InterPro" id="IPR008189">
    <property type="entry name" value="rRNA_ssu_MeTfrase_I"/>
</dbReference>
<dbReference type="InterPro" id="IPR018063">
    <property type="entry name" value="SAM_MeTrfase_RsmI_CS"/>
</dbReference>
<dbReference type="NCBIfam" id="TIGR00096">
    <property type="entry name" value="16S rRNA (cytidine(1402)-2'-O)-methyltransferase"/>
    <property type="match status" value="1"/>
</dbReference>
<dbReference type="PANTHER" id="PTHR46111">
    <property type="entry name" value="RIBOSOMAL RNA SMALL SUBUNIT METHYLTRANSFERASE I"/>
    <property type="match status" value="1"/>
</dbReference>
<dbReference type="PANTHER" id="PTHR46111:SF1">
    <property type="entry name" value="RIBOSOMAL RNA SMALL SUBUNIT METHYLTRANSFERASE I"/>
    <property type="match status" value="1"/>
</dbReference>
<dbReference type="Pfam" id="PF00590">
    <property type="entry name" value="TP_methylase"/>
    <property type="match status" value="1"/>
</dbReference>
<dbReference type="PIRSF" id="PIRSF005917">
    <property type="entry name" value="MTase_YraL"/>
    <property type="match status" value="1"/>
</dbReference>
<dbReference type="SUPFAM" id="SSF53790">
    <property type="entry name" value="Tetrapyrrole methylase"/>
    <property type="match status" value="1"/>
</dbReference>
<dbReference type="PROSITE" id="PS01296">
    <property type="entry name" value="RSMI"/>
    <property type="match status" value="1"/>
</dbReference>
<reference key="1">
    <citation type="journal article" date="2001" name="Nucleic Acids Res.">
        <title>The complete genome sequence of the murine respiratory pathogen Mycoplasma pulmonis.</title>
        <authorList>
            <person name="Chambaud I."/>
            <person name="Heilig R."/>
            <person name="Ferris S."/>
            <person name="Barbe V."/>
            <person name="Samson D."/>
            <person name="Galisson F."/>
            <person name="Moszer I."/>
            <person name="Dybvig K."/>
            <person name="Wroblewski H."/>
            <person name="Viari A."/>
            <person name="Rocha E.P.C."/>
            <person name="Blanchard A."/>
        </authorList>
    </citation>
    <scope>NUCLEOTIDE SEQUENCE [LARGE SCALE GENOMIC DNA]</scope>
    <source>
        <strain>UAB CTIP</strain>
    </source>
</reference>
<organism>
    <name type="scientific">Mycoplasmopsis pulmonis (strain UAB CTIP)</name>
    <name type="common">Mycoplasma pulmonis</name>
    <dbReference type="NCBI Taxonomy" id="272635"/>
    <lineage>
        <taxon>Bacteria</taxon>
        <taxon>Bacillati</taxon>
        <taxon>Mycoplasmatota</taxon>
        <taxon>Mycoplasmoidales</taxon>
        <taxon>Metamycoplasmataceae</taxon>
        <taxon>Mycoplasmopsis</taxon>
    </lineage>
</organism>
<evidence type="ECO:0000255" key="1">
    <source>
        <dbReference type="HAMAP-Rule" id="MF_01877"/>
    </source>
</evidence>